<proteinExistence type="inferred from homology"/>
<reference key="1">
    <citation type="journal article" date="1997" name="Mol. Gen. Genet.">
        <title>Characterization and mutagenesis of the leucine biosynthetic genes of Azotobacter vinelandii: an analysis of the rarity of amino acid auxotrophs.</title>
        <authorList>
            <person name="Manna A.C."/>
            <person name="Das H.K."/>
        </authorList>
    </citation>
    <scope>NUCLEOTIDE SEQUENCE [GENOMIC DNA]</scope>
    <source>
        <strain>ATCC 13705 / OP1 / DSM 366 / NCIMB 11614 / LMG 3878 / UW</strain>
    </source>
</reference>
<protein>
    <recommendedName>
        <fullName evidence="2">tRNA-dihydrouridine(16) synthase</fullName>
        <ecNumber evidence="2">1.3.1.-</ecNumber>
    </recommendedName>
    <alternativeName>
        <fullName evidence="2">U16-specific dihydrouridine synthase</fullName>
        <shortName evidence="2">U16-specific Dus</shortName>
    </alternativeName>
    <alternativeName>
        <fullName evidence="2">tRNA-dihydrouridine synthase C</fullName>
    </alternativeName>
</protein>
<accession>P96192</accession>
<feature type="chain" id="PRO_0000162108" description="tRNA-dihydrouridine(16) synthase">
    <location>
        <begin position="1"/>
        <end position="309"/>
    </location>
</feature>
<feature type="active site" description="Proton donor" evidence="2">
    <location>
        <position position="98"/>
    </location>
</feature>
<feature type="binding site" evidence="2">
    <location>
        <begin position="7"/>
        <end position="9"/>
    </location>
    <ligand>
        <name>FMN</name>
        <dbReference type="ChEBI" id="CHEBI:58210"/>
    </ligand>
</feature>
<feature type="binding site" evidence="2">
    <location>
        <position position="68"/>
    </location>
    <ligand>
        <name>FMN</name>
        <dbReference type="ChEBI" id="CHEBI:58210"/>
    </ligand>
</feature>
<feature type="binding site" evidence="1">
    <location>
        <position position="137"/>
    </location>
    <ligand>
        <name>FMN</name>
        <dbReference type="ChEBI" id="CHEBI:58210"/>
    </ligand>
</feature>
<feature type="binding site" evidence="1">
    <location>
        <position position="198"/>
    </location>
    <ligand>
        <name>FMN</name>
        <dbReference type="ChEBI" id="CHEBI:58210"/>
    </ligand>
</feature>
<feature type="binding site" evidence="2">
    <location>
        <begin position="220"/>
        <end position="221"/>
    </location>
    <ligand>
        <name>FMN</name>
        <dbReference type="ChEBI" id="CHEBI:58210"/>
    </ligand>
</feature>
<feature type="site" description="Interacts with tRNA; defines subfamily-specific binding signature" evidence="2">
    <location>
        <position position="35"/>
    </location>
</feature>
<feature type="site" description="Interacts with tRNA" evidence="2">
    <location>
        <position position="95"/>
    </location>
</feature>
<feature type="site" description="Interacts with tRNA" evidence="2">
    <location>
        <position position="175"/>
    </location>
</feature>
<feature type="site" description="Interacts with tRNA; defines subfamily-specific binding signature" evidence="1">
    <location>
        <position position="267"/>
    </location>
</feature>
<feature type="site" description="Interacts with tRNA; defines subfamily-specific binding signature" evidence="1">
    <location>
        <position position="286"/>
    </location>
</feature>
<keyword id="KW-0285">Flavoprotein</keyword>
<keyword id="KW-0288">FMN</keyword>
<keyword id="KW-0521">NADP</keyword>
<keyword id="KW-0560">Oxidoreductase</keyword>
<keyword id="KW-0694">RNA-binding</keyword>
<keyword id="KW-0819">tRNA processing</keyword>
<keyword id="KW-0820">tRNA-binding</keyword>
<name>DUSC_AZOVI</name>
<dbReference type="EC" id="1.3.1.-" evidence="2"/>
<dbReference type="EMBL" id="Y11280">
    <property type="protein sequence ID" value="CAA72146.1"/>
    <property type="molecule type" value="Genomic_DNA"/>
</dbReference>
<dbReference type="SMR" id="P96192"/>
<dbReference type="GO" id="GO:0050660">
    <property type="term" value="F:flavin adenine dinucleotide binding"/>
    <property type="evidence" value="ECO:0007669"/>
    <property type="project" value="InterPro"/>
</dbReference>
<dbReference type="GO" id="GO:0010181">
    <property type="term" value="F:FMN binding"/>
    <property type="evidence" value="ECO:0007669"/>
    <property type="project" value="UniProtKB-UniRule"/>
</dbReference>
<dbReference type="GO" id="GO:0000049">
    <property type="term" value="F:tRNA binding"/>
    <property type="evidence" value="ECO:0007669"/>
    <property type="project" value="UniProtKB-UniRule"/>
</dbReference>
<dbReference type="GO" id="GO:0102262">
    <property type="term" value="F:tRNA-dihydrouridine16 synthase activity"/>
    <property type="evidence" value="ECO:0007669"/>
    <property type="project" value="RHEA"/>
</dbReference>
<dbReference type="CDD" id="cd02801">
    <property type="entry name" value="DUS_like_FMN"/>
    <property type="match status" value="1"/>
</dbReference>
<dbReference type="Gene3D" id="3.20.20.70">
    <property type="entry name" value="Aldolase class I"/>
    <property type="match status" value="2"/>
</dbReference>
<dbReference type="HAMAP" id="MF_02043">
    <property type="entry name" value="DusC_subfam"/>
    <property type="match status" value="1"/>
</dbReference>
<dbReference type="InterPro" id="IPR013785">
    <property type="entry name" value="Aldolase_TIM"/>
</dbReference>
<dbReference type="InterPro" id="IPR035587">
    <property type="entry name" value="DUS-like_FMN-bd"/>
</dbReference>
<dbReference type="InterPro" id="IPR032886">
    <property type="entry name" value="DusC"/>
</dbReference>
<dbReference type="InterPro" id="IPR018517">
    <property type="entry name" value="tRNA_hU_synthase_CS"/>
</dbReference>
<dbReference type="PANTHER" id="PTHR11082">
    <property type="entry name" value="TRNA-DIHYDROURIDINE SYNTHASE"/>
    <property type="match status" value="1"/>
</dbReference>
<dbReference type="PANTHER" id="PTHR11082:SF26">
    <property type="entry name" value="TRNA-DIHYDROURIDINE(16) SYNTHASE"/>
    <property type="match status" value="1"/>
</dbReference>
<dbReference type="Pfam" id="PF01207">
    <property type="entry name" value="Dus"/>
    <property type="match status" value="2"/>
</dbReference>
<dbReference type="SUPFAM" id="SSF51395">
    <property type="entry name" value="FMN-linked oxidoreductases"/>
    <property type="match status" value="1"/>
</dbReference>
<dbReference type="PROSITE" id="PS01136">
    <property type="entry name" value="UPF0034"/>
    <property type="match status" value="1"/>
</dbReference>
<organism>
    <name type="scientific">Azotobacter vinelandii</name>
    <dbReference type="NCBI Taxonomy" id="354"/>
    <lineage>
        <taxon>Bacteria</taxon>
        <taxon>Pseudomonadati</taxon>
        <taxon>Pseudomonadota</taxon>
        <taxon>Gammaproteobacteria</taxon>
        <taxon>Pseudomonadales</taxon>
        <taxon>Pseudomonadaceae</taxon>
        <taxon>Azotobacter</taxon>
    </lineage>
</organism>
<evidence type="ECO:0000250" key="1">
    <source>
        <dbReference type="UniProtKB" id="P33371"/>
    </source>
</evidence>
<evidence type="ECO:0000255" key="2">
    <source>
        <dbReference type="HAMAP-Rule" id="MF_02043"/>
    </source>
</evidence>
<comment type="function">
    <text evidence="2">Catalyzes the synthesis of 5,6-dihydrouridine (D), a modified base found in the D-loop of most tRNAs, via the reduction of the C5-C6 double bond in target uridines. Specifically modifies U16 in tRNAs.</text>
</comment>
<comment type="catalytic activity">
    <reaction evidence="2">
        <text>5,6-dihydrouridine(16) in tRNA + NADP(+) = uridine(16) in tRNA + NADPH + H(+)</text>
        <dbReference type="Rhea" id="RHEA:53376"/>
        <dbReference type="Rhea" id="RHEA-COMP:13543"/>
        <dbReference type="Rhea" id="RHEA-COMP:13544"/>
        <dbReference type="ChEBI" id="CHEBI:15378"/>
        <dbReference type="ChEBI" id="CHEBI:57783"/>
        <dbReference type="ChEBI" id="CHEBI:58349"/>
        <dbReference type="ChEBI" id="CHEBI:65315"/>
        <dbReference type="ChEBI" id="CHEBI:74443"/>
    </reaction>
</comment>
<comment type="catalytic activity">
    <reaction evidence="2">
        <text>5,6-dihydrouridine(16) in tRNA + NAD(+) = uridine(16) in tRNA + NADH + H(+)</text>
        <dbReference type="Rhea" id="RHEA:53380"/>
        <dbReference type="Rhea" id="RHEA-COMP:13543"/>
        <dbReference type="Rhea" id="RHEA-COMP:13544"/>
        <dbReference type="ChEBI" id="CHEBI:15378"/>
        <dbReference type="ChEBI" id="CHEBI:57540"/>
        <dbReference type="ChEBI" id="CHEBI:57945"/>
        <dbReference type="ChEBI" id="CHEBI:65315"/>
        <dbReference type="ChEBI" id="CHEBI:74443"/>
    </reaction>
</comment>
<comment type="cofactor">
    <cofactor evidence="2">
        <name>FMN</name>
        <dbReference type="ChEBI" id="CHEBI:58210"/>
    </cofactor>
</comment>
<comment type="similarity">
    <text evidence="2">Belongs to the Dus family. DusC subfamily.</text>
</comment>
<sequence length="309" mass="33181">MRIALAPMEGLVDELLRDLLTRVGGIDWCVTEFVRVCDRLLPVAQFEKLAPELRHGWRTRAGTPMHLQLLGSDPACLAENAALAAELGAPAIDLNFGCPAKTSTARGADGCCSTSRNCCMPSSARCAGPCRRCAGDRQDAPGVRPARGRPGVRRALVEGGVAHLVVHARTKVEGYRPPASWEWLARVREAVAVPVYANRKSGRRRIGCREISGVEDVMLGCGLVSRPDLARQIAMRAPDARSSRRAGVRYSRWCASSGGAPGSGSRRATPLAGSSSGWACWRAVIRRRPRCSPNCAGRTTAGGWMPCWA</sequence>
<gene>
    <name evidence="2" type="primary">dusC</name>
</gene>